<proteinExistence type="inferred from homology"/>
<feature type="chain" id="PRO_0000313856" description="tRNA (cytidine/uridine-2'-O-)-methyltransferase TrmJ">
    <location>
        <begin position="1"/>
        <end position="246"/>
    </location>
</feature>
<feature type="binding site" evidence="1">
    <location>
        <begin position="79"/>
        <end position="81"/>
    </location>
    <ligand>
        <name>S-adenosyl-L-methionine</name>
        <dbReference type="ChEBI" id="CHEBI:59789"/>
    </ligand>
</feature>
<feature type="binding site" evidence="1">
    <location>
        <position position="114"/>
    </location>
    <ligand>
        <name>S-adenosyl-L-methionine</name>
        <dbReference type="ChEBI" id="CHEBI:59789"/>
    </ligand>
</feature>
<feature type="binding site" evidence="1">
    <location>
        <position position="134"/>
    </location>
    <ligand>
        <name>S-adenosyl-L-methionine</name>
        <dbReference type="ChEBI" id="CHEBI:59789"/>
    </ligand>
</feature>
<feature type="binding site" evidence="1">
    <location>
        <begin position="141"/>
        <end position="143"/>
    </location>
    <ligand>
        <name>S-adenosyl-L-methionine</name>
        <dbReference type="ChEBI" id="CHEBI:59789"/>
    </ligand>
</feature>
<comment type="function">
    <text evidence="1">Catalyzes the formation of 2'O-methylated cytidine (Cm32) or 2'O-methylated uridine (Um32) at position 32 in tRNA.</text>
</comment>
<comment type="catalytic activity">
    <reaction evidence="1">
        <text>cytidine(32) in tRNA + S-adenosyl-L-methionine = 2'-O-methylcytidine(32) in tRNA + S-adenosyl-L-homocysteine + H(+)</text>
        <dbReference type="Rhea" id="RHEA:42932"/>
        <dbReference type="Rhea" id="RHEA-COMP:10288"/>
        <dbReference type="Rhea" id="RHEA-COMP:10289"/>
        <dbReference type="ChEBI" id="CHEBI:15378"/>
        <dbReference type="ChEBI" id="CHEBI:57856"/>
        <dbReference type="ChEBI" id="CHEBI:59789"/>
        <dbReference type="ChEBI" id="CHEBI:74495"/>
        <dbReference type="ChEBI" id="CHEBI:82748"/>
        <dbReference type="EC" id="2.1.1.200"/>
    </reaction>
</comment>
<comment type="catalytic activity">
    <reaction evidence="1">
        <text>uridine(32) in tRNA + S-adenosyl-L-methionine = 2'-O-methyluridine(32) in tRNA + S-adenosyl-L-homocysteine + H(+)</text>
        <dbReference type="Rhea" id="RHEA:42936"/>
        <dbReference type="Rhea" id="RHEA-COMP:10107"/>
        <dbReference type="Rhea" id="RHEA-COMP:10290"/>
        <dbReference type="ChEBI" id="CHEBI:15378"/>
        <dbReference type="ChEBI" id="CHEBI:57856"/>
        <dbReference type="ChEBI" id="CHEBI:59789"/>
        <dbReference type="ChEBI" id="CHEBI:65315"/>
        <dbReference type="ChEBI" id="CHEBI:74478"/>
        <dbReference type="EC" id="2.1.1.200"/>
    </reaction>
</comment>
<comment type="subunit">
    <text evidence="1">Homodimer.</text>
</comment>
<comment type="subcellular location">
    <subcellularLocation>
        <location evidence="1">Cytoplasm</location>
    </subcellularLocation>
</comment>
<comment type="similarity">
    <text evidence="2">Belongs to the class IV-like SAM-binding methyltransferase superfamily. RNA methyltransferase TrmH family.</text>
</comment>
<keyword id="KW-0963">Cytoplasm</keyword>
<keyword id="KW-0489">Methyltransferase</keyword>
<keyword id="KW-0949">S-adenosyl-L-methionine</keyword>
<keyword id="KW-0808">Transferase</keyword>
<keyword id="KW-0819">tRNA processing</keyword>
<gene>
    <name type="primary">trmJ</name>
    <name type="ordered locus">ECP_2537</name>
</gene>
<evidence type="ECO:0000250" key="1">
    <source>
        <dbReference type="UniProtKB" id="P0AE01"/>
    </source>
</evidence>
<evidence type="ECO:0000305" key="2"/>
<dbReference type="EC" id="2.1.1.200" evidence="1"/>
<dbReference type="EMBL" id="CP000247">
    <property type="protein sequence ID" value="ABG70526.1"/>
    <property type="molecule type" value="Genomic_DNA"/>
</dbReference>
<dbReference type="RefSeq" id="WP_000940006.1">
    <property type="nucleotide sequence ID" value="NC_008253.1"/>
</dbReference>
<dbReference type="SMR" id="Q0TEV3"/>
<dbReference type="KEGG" id="ecp:ECP_2537"/>
<dbReference type="HOGENOM" id="CLU_056931_0_1_6"/>
<dbReference type="Proteomes" id="UP000009182">
    <property type="component" value="Chromosome"/>
</dbReference>
<dbReference type="GO" id="GO:0005829">
    <property type="term" value="C:cytosol"/>
    <property type="evidence" value="ECO:0007669"/>
    <property type="project" value="TreeGrafter"/>
</dbReference>
<dbReference type="GO" id="GO:0003723">
    <property type="term" value="F:RNA binding"/>
    <property type="evidence" value="ECO:0007669"/>
    <property type="project" value="InterPro"/>
</dbReference>
<dbReference type="GO" id="GO:0160206">
    <property type="term" value="F:tRNA (cytidine(32)/uridine(32)-2'-O)-methyltransferase activity"/>
    <property type="evidence" value="ECO:0007669"/>
    <property type="project" value="UniProtKB-EC"/>
</dbReference>
<dbReference type="GO" id="GO:0002128">
    <property type="term" value="P:tRNA nucleoside ribose methylation"/>
    <property type="evidence" value="ECO:0007669"/>
    <property type="project" value="TreeGrafter"/>
</dbReference>
<dbReference type="CDD" id="cd18093">
    <property type="entry name" value="SpoU-like_TrmJ"/>
    <property type="match status" value="1"/>
</dbReference>
<dbReference type="FunFam" id="1.10.8.590:FF:000001">
    <property type="entry name" value="tRNA:Cm32/Um32 methyltransferase"/>
    <property type="match status" value="1"/>
</dbReference>
<dbReference type="FunFam" id="3.40.1280.10:FF:000006">
    <property type="entry name" value="Uncharacterized tRNA/rRNA methyltransferase HI_0380"/>
    <property type="match status" value="1"/>
</dbReference>
<dbReference type="Gene3D" id="1.10.8.590">
    <property type="match status" value="1"/>
</dbReference>
<dbReference type="Gene3D" id="3.40.1280.10">
    <property type="match status" value="1"/>
</dbReference>
<dbReference type="InterPro" id="IPR029028">
    <property type="entry name" value="Alpha/beta_knot_MTases"/>
</dbReference>
<dbReference type="InterPro" id="IPR004384">
    <property type="entry name" value="RNA_MeTrfase_TrmJ/LasT"/>
</dbReference>
<dbReference type="InterPro" id="IPR001537">
    <property type="entry name" value="SpoU_MeTrfase"/>
</dbReference>
<dbReference type="InterPro" id="IPR029026">
    <property type="entry name" value="tRNA_m1G_MTases_N"/>
</dbReference>
<dbReference type="NCBIfam" id="NF011694">
    <property type="entry name" value="PRK15114.1"/>
    <property type="match status" value="1"/>
</dbReference>
<dbReference type="NCBIfam" id="TIGR00050">
    <property type="entry name" value="rRNA_methyl_1"/>
    <property type="match status" value="1"/>
</dbReference>
<dbReference type="PANTHER" id="PTHR42786:SF2">
    <property type="entry name" value="TRNA (CYTIDINE_URIDINE-2'-O-)-METHYLTRANSFERASE TRMJ"/>
    <property type="match status" value="1"/>
</dbReference>
<dbReference type="PANTHER" id="PTHR42786">
    <property type="entry name" value="TRNA/RRNA METHYLTRANSFERASE"/>
    <property type="match status" value="1"/>
</dbReference>
<dbReference type="Pfam" id="PF00588">
    <property type="entry name" value="SpoU_methylase"/>
    <property type="match status" value="1"/>
</dbReference>
<dbReference type="PIRSF" id="PIRSF004808">
    <property type="entry name" value="LasT"/>
    <property type="match status" value="1"/>
</dbReference>
<dbReference type="SUPFAM" id="SSF75217">
    <property type="entry name" value="alpha/beta knot"/>
    <property type="match status" value="1"/>
</dbReference>
<name>TRMJ_ECOL5</name>
<sequence length="246" mass="27030">MLQNIRIVLVETSHTGNMGSVARAMKTMGLTNLWLVNPLVKPDSQAIALAAGASDVIGNAHIVDTLDEALAGCSLVVGTSARSRTLPWPILDPRECGLKSVAEAANTPVALVFGRERVGLTNEELQKCHYHVAIAANPEYSSLNLAMAVQVIAYEVRMAWLATQENGEQVEHEETPYPLVDDLERFYGHLEQTLLATGFIRENHPGQVMNKLRRLFTRARPESQELNILRGILASIEQQNKGNKAE</sequence>
<reference key="1">
    <citation type="journal article" date="2006" name="Mol. Microbiol.">
        <title>Role of pathogenicity island-associated integrases in the genome plasticity of uropathogenic Escherichia coli strain 536.</title>
        <authorList>
            <person name="Hochhut B."/>
            <person name="Wilde C."/>
            <person name="Balling G."/>
            <person name="Middendorf B."/>
            <person name="Dobrindt U."/>
            <person name="Brzuszkiewicz E."/>
            <person name="Gottschalk G."/>
            <person name="Carniel E."/>
            <person name="Hacker J."/>
        </authorList>
    </citation>
    <scope>NUCLEOTIDE SEQUENCE [LARGE SCALE GENOMIC DNA]</scope>
    <source>
        <strain>536 / UPEC</strain>
    </source>
</reference>
<protein>
    <recommendedName>
        <fullName evidence="1">tRNA (cytidine/uridine-2'-O-)-methyltransferase TrmJ</fullName>
        <ecNumber evidence="1">2.1.1.200</ecNumber>
    </recommendedName>
    <alternativeName>
        <fullName evidence="1">tRNA (cytidine(32)/uridine(32)-2'-O)-methyltransferase</fullName>
    </alternativeName>
    <alternativeName>
        <fullName evidence="1">tRNA Cm32/Um32 methyltransferase</fullName>
    </alternativeName>
</protein>
<organism>
    <name type="scientific">Escherichia coli O6:K15:H31 (strain 536 / UPEC)</name>
    <dbReference type="NCBI Taxonomy" id="362663"/>
    <lineage>
        <taxon>Bacteria</taxon>
        <taxon>Pseudomonadati</taxon>
        <taxon>Pseudomonadota</taxon>
        <taxon>Gammaproteobacteria</taxon>
        <taxon>Enterobacterales</taxon>
        <taxon>Enterobacteriaceae</taxon>
        <taxon>Escherichia</taxon>
    </lineage>
</organism>
<accession>Q0TEV3</accession>